<proteinExistence type="inferred from homology"/>
<reference key="1">
    <citation type="journal article" date="2005" name="Nature">
        <title>The map-based sequence of the rice genome.</title>
        <authorList>
            <consortium name="International rice genome sequencing project (IRGSP)"/>
        </authorList>
    </citation>
    <scope>NUCLEOTIDE SEQUENCE [LARGE SCALE GENOMIC DNA]</scope>
    <source>
        <strain>cv. Nipponbare</strain>
    </source>
</reference>
<reference key="2">
    <citation type="journal article" date="2008" name="Nucleic Acids Res.">
        <title>The rice annotation project database (RAP-DB): 2008 update.</title>
        <authorList>
            <consortium name="The rice annotation project (RAP)"/>
        </authorList>
    </citation>
    <scope>GENOME REANNOTATION</scope>
    <source>
        <strain>cv. Nipponbare</strain>
    </source>
</reference>
<reference key="3">
    <citation type="journal article" date="2013" name="Rice">
        <title>Improvement of the Oryza sativa Nipponbare reference genome using next generation sequence and optical map data.</title>
        <authorList>
            <person name="Kawahara Y."/>
            <person name="de la Bastide M."/>
            <person name="Hamilton J.P."/>
            <person name="Kanamori H."/>
            <person name="McCombie W.R."/>
            <person name="Ouyang S."/>
            <person name="Schwartz D.C."/>
            <person name="Tanaka T."/>
            <person name="Wu J."/>
            <person name="Zhou S."/>
            <person name="Childs K.L."/>
            <person name="Davidson R.M."/>
            <person name="Lin H."/>
            <person name="Quesada-Ocampo L."/>
            <person name="Vaillancourt B."/>
            <person name="Sakai H."/>
            <person name="Lee S.S."/>
            <person name="Kim J."/>
            <person name="Numa H."/>
            <person name="Itoh T."/>
            <person name="Buell C.R."/>
            <person name="Matsumoto T."/>
        </authorList>
    </citation>
    <scope>GENOME REANNOTATION</scope>
    <source>
        <strain>cv. Nipponbare</strain>
    </source>
</reference>
<reference key="4">
    <citation type="journal article" date="2005" name="PLoS Biol.">
        <title>The genomes of Oryza sativa: a history of duplications.</title>
        <authorList>
            <person name="Yu J."/>
            <person name="Wang J."/>
            <person name="Lin W."/>
            <person name="Li S."/>
            <person name="Li H."/>
            <person name="Zhou J."/>
            <person name="Ni P."/>
            <person name="Dong W."/>
            <person name="Hu S."/>
            <person name="Zeng C."/>
            <person name="Zhang J."/>
            <person name="Zhang Y."/>
            <person name="Li R."/>
            <person name="Xu Z."/>
            <person name="Li S."/>
            <person name="Li X."/>
            <person name="Zheng H."/>
            <person name="Cong L."/>
            <person name="Lin L."/>
            <person name="Yin J."/>
            <person name="Geng J."/>
            <person name="Li G."/>
            <person name="Shi J."/>
            <person name="Liu J."/>
            <person name="Lv H."/>
            <person name="Li J."/>
            <person name="Wang J."/>
            <person name="Deng Y."/>
            <person name="Ran L."/>
            <person name="Shi X."/>
            <person name="Wang X."/>
            <person name="Wu Q."/>
            <person name="Li C."/>
            <person name="Ren X."/>
            <person name="Wang J."/>
            <person name="Wang X."/>
            <person name="Li D."/>
            <person name="Liu D."/>
            <person name="Zhang X."/>
            <person name="Ji Z."/>
            <person name="Zhao W."/>
            <person name="Sun Y."/>
            <person name="Zhang Z."/>
            <person name="Bao J."/>
            <person name="Han Y."/>
            <person name="Dong L."/>
            <person name="Ji J."/>
            <person name="Chen P."/>
            <person name="Wu S."/>
            <person name="Liu J."/>
            <person name="Xiao Y."/>
            <person name="Bu D."/>
            <person name="Tan J."/>
            <person name="Yang L."/>
            <person name="Ye C."/>
            <person name="Zhang J."/>
            <person name="Xu J."/>
            <person name="Zhou Y."/>
            <person name="Yu Y."/>
            <person name="Zhang B."/>
            <person name="Zhuang S."/>
            <person name="Wei H."/>
            <person name="Liu B."/>
            <person name="Lei M."/>
            <person name="Yu H."/>
            <person name="Li Y."/>
            <person name="Xu H."/>
            <person name="Wei S."/>
            <person name="He X."/>
            <person name="Fang L."/>
            <person name="Zhang Z."/>
            <person name="Zhang Y."/>
            <person name="Huang X."/>
            <person name="Su Z."/>
            <person name="Tong W."/>
            <person name="Li J."/>
            <person name="Tong Z."/>
            <person name="Li S."/>
            <person name="Ye J."/>
            <person name="Wang L."/>
            <person name="Fang L."/>
            <person name="Lei T."/>
            <person name="Chen C.-S."/>
            <person name="Chen H.-C."/>
            <person name="Xu Z."/>
            <person name="Li H."/>
            <person name="Huang H."/>
            <person name="Zhang F."/>
            <person name="Xu H."/>
            <person name="Li N."/>
            <person name="Zhao C."/>
            <person name="Li S."/>
            <person name="Dong L."/>
            <person name="Huang Y."/>
            <person name="Li L."/>
            <person name="Xi Y."/>
            <person name="Qi Q."/>
            <person name="Li W."/>
            <person name="Zhang B."/>
            <person name="Hu W."/>
            <person name="Zhang Y."/>
            <person name="Tian X."/>
            <person name="Jiao Y."/>
            <person name="Liang X."/>
            <person name="Jin J."/>
            <person name="Gao L."/>
            <person name="Zheng W."/>
            <person name="Hao B."/>
            <person name="Liu S.-M."/>
            <person name="Wang W."/>
            <person name="Yuan L."/>
            <person name="Cao M."/>
            <person name="McDermott J."/>
            <person name="Samudrala R."/>
            <person name="Wang J."/>
            <person name="Wong G.K.-S."/>
            <person name="Yang H."/>
        </authorList>
    </citation>
    <scope>NUCLEOTIDE SEQUENCE [LARGE SCALE GENOMIC DNA]</scope>
    <source>
        <strain>cv. Nipponbare</strain>
    </source>
</reference>
<reference key="5">
    <citation type="journal article" date="2003" name="Science">
        <title>Collection, mapping, and annotation of over 28,000 cDNA clones from japonica rice.</title>
        <authorList>
            <consortium name="The rice full-length cDNA consortium"/>
        </authorList>
    </citation>
    <scope>NUCLEOTIDE SEQUENCE [LARGE SCALE MRNA]</scope>
    <source>
        <strain>cv. Nipponbare</strain>
    </source>
</reference>
<gene>
    <name evidence="4" type="ordered locus">Os07g0631100</name>
    <name evidence="3" type="ordered locus">LOC_Os07g43730</name>
    <name evidence="5" type="ORF">OsJ_25233</name>
    <name type="ORF">P0519E12.3</name>
</gene>
<name>ELOF1_ORYSJ</name>
<comment type="function">
    <text evidence="1">Transcription elongation factor implicated in the maintenance of proper chromatin structure in actively transcribed regions.</text>
</comment>
<comment type="subcellular location">
    <subcellularLocation>
        <location evidence="1">Nucleus</location>
    </subcellularLocation>
</comment>
<comment type="similarity">
    <text evidence="3">Belongs to the ELOF1 family.</text>
</comment>
<dbReference type="EMBL" id="AP004339">
    <property type="protein sequence ID" value="BAC10134.1"/>
    <property type="molecule type" value="Genomic_DNA"/>
</dbReference>
<dbReference type="EMBL" id="AP008213">
    <property type="protein sequence ID" value="BAF22274.1"/>
    <property type="molecule type" value="Genomic_DNA"/>
</dbReference>
<dbReference type="EMBL" id="AP014963">
    <property type="protein sequence ID" value="BAT02772.1"/>
    <property type="molecule type" value="Genomic_DNA"/>
</dbReference>
<dbReference type="EMBL" id="CM000144">
    <property type="protein sequence ID" value="EAZ40760.1"/>
    <property type="molecule type" value="Genomic_DNA"/>
</dbReference>
<dbReference type="EMBL" id="AK061633">
    <property type="status" value="NOT_ANNOTATED_CDS"/>
    <property type="molecule type" value="mRNA"/>
</dbReference>
<dbReference type="RefSeq" id="XP_015647978.1">
    <property type="nucleotide sequence ID" value="XM_015792492.1"/>
</dbReference>
<dbReference type="RefSeq" id="XP_015647979.1">
    <property type="nucleotide sequence ID" value="XM_015792493.1"/>
</dbReference>
<dbReference type="SMR" id="Q8LHP0"/>
<dbReference type="FunCoup" id="Q8LHP0">
    <property type="interactions" value="2182"/>
</dbReference>
<dbReference type="STRING" id="39947.Q8LHP0"/>
<dbReference type="PaxDb" id="39947-Q8LHP0"/>
<dbReference type="EnsemblPlants" id="Os07t0631100-01">
    <property type="protein sequence ID" value="Os07t0631100-01"/>
    <property type="gene ID" value="Os07g0631100"/>
</dbReference>
<dbReference type="EnsemblPlants" id="Os07t0631100-02">
    <property type="protein sequence ID" value="Os07t0631100-02"/>
    <property type="gene ID" value="Os07g0631100"/>
</dbReference>
<dbReference type="Gramene" id="Os07t0631100-01">
    <property type="protein sequence ID" value="Os07t0631100-01"/>
    <property type="gene ID" value="Os07g0631100"/>
</dbReference>
<dbReference type="Gramene" id="Os07t0631100-02">
    <property type="protein sequence ID" value="Os07t0631100-02"/>
    <property type="gene ID" value="Os07g0631100"/>
</dbReference>
<dbReference type="KEGG" id="dosa:Os07g0631100"/>
<dbReference type="eggNOG" id="KOG3214">
    <property type="taxonomic scope" value="Eukaryota"/>
</dbReference>
<dbReference type="HOGENOM" id="CLU_105983_2_0_1"/>
<dbReference type="InParanoid" id="Q8LHP0"/>
<dbReference type="OMA" id="CLDANKK"/>
<dbReference type="OrthoDB" id="445983at2759"/>
<dbReference type="Proteomes" id="UP000000763">
    <property type="component" value="Chromosome 7"/>
</dbReference>
<dbReference type="Proteomes" id="UP000007752">
    <property type="component" value="Chromosome 7"/>
</dbReference>
<dbReference type="Proteomes" id="UP000059680">
    <property type="component" value="Chromosome 7"/>
</dbReference>
<dbReference type="GO" id="GO:0008023">
    <property type="term" value="C:transcription elongation factor complex"/>
    <property type="evidence" value="ECO:0000318"/>
    <property type="project" value="GO_Central"/>
</dbReference>
<dbReference type="GO" id="GO:0000993">
    <property type="term" value="F:RNA polymerase II complex binding"/>
    <property type="evidence" value="ECO:0000318"/>
    <property type="project" value="GO_Central"/>
</dbReference>
<dbReference type="GO" id="GO:0008270">
    <property type="term" value="F:zinc ion binding"/>
    <property type="evidence" value="ECO:0007669"/>
    <property type="project" value="UniProtKB-KW"/>
</dbReference>
<dbReference type="GO" id="GO:0006368">
    <property type="term" value="P:transcription elongation by RNA polymerase II"/>
    <property type="evidence" value="ECO:0000318"/>
    <property type="project" value="GO_Central"/>
</dbReference>
<dbReference type="FunFam" id="2.20.25.190:FF:000001">
    <property type="entry name" value="Transcription elongation factor 1 homolog"/>
    <property type="match status" value="1"/>
</dbReference>
<dbReference type="Gene3D" id="2.20.25.190">
    <property type="match status" value="1"/>
</dbReference>
<dbReference type="InterPro" id="IPR007808">
    <property type="entry name" value="Elf1"/>
</dbReference>
<dbReference type="InterPro" id="IPR038567">
    <property type="entry name" value="T_Elf1_sf"/>
</dbReference>
<dbReference type="PANTHER" id="PTHR20934">
    <property type="entry name" value="TRANSCRIPTION ELONGATION FACTOR 1 HOMOLOG"/>
    <property type="match status" value="1"/>
</dbReference>
<dbReference type="PANTHER" id="PTHR20934:SF19">
    <property type="entry name" value="TRANSCRIPTION ELONGATION FACTOR 1 HOMOLOG"/>
    <property type="match status" value="1"/>
</dbReference>
<dbReference type="Pfam" id="PF05129">
    <property type="entry name" value="Zn_ribbon_Elf1"/>
    <property type="match status" value="1"/>
</dbReference>
<dbReference type="SUPFAM" id="SSF57783">
    <property type="entry name" value="Zinc beta-ribbon"/>
    <property type="match status" value="1"/>
</dbReference>
<feature type="chain" id="PRO_0000120947" description="Transcription elongation factor 1 homolog">
    <location>
        <begin position="1"/>
        <end position="89"/>
    </location>
</feature>
<feature type="binding site" evidence="2">
    <location>
        <position position="25"/>
    </location>
    <ligand>
        <name>Zn(2+)</name>
        <dbReference type="ChEBI" id="CHEBI:29105"/>
    </ligand>
</feature>
<feature type="binding site" evidence="2">
    <location>
        <position position="28"/>
    </location>
    <ligand>
        <name>Zn(2+)</name>
        <dbReference type="ChEBI" id="CHEBI:29105"/>
    </ligand>
</feature>
<feature type="binding site" evidence="2">
    <location>
        <position position="49"/>
    </location>
    <ligand>
        <name>Zn(2+)</name>
        <dbReference type="ChEBI" id="CHEBI:29105"/>
    </ligand>
</feature>
<feature type="binding site" evidence="2">
    <location>
        <position position="52"/>
    </location>
    <ligand>
        <name>Zn(2+)</name>
        <dbReference type="ChEBI" id="CHEBI:29105"/>
    </ligand>
</feature>
<evidence type="ECO:0000250" key="1"/>
<evidence type="ECO:0000250" key="2">
    <source>
        <dbReference type="UniProtKB" id="P60003"/>
    </source>
</evidence>
<evidence type="ECO:0000305" key="3"/>
<evidence type="ECO:0000312" key="4">
    <source>
        <dbReference type="EMBL" id="BAF22274.1"/>
    </source>
</evidence>
<evidence type="ECO:0000312" key="5">
    <source>
        <dbReference type="EMBL" id="EAZ40760.1"/>
    </source>
</evidence>
<accession>Q8LHP0</accession>
<accession>A0A0P0X940</accession>
<accession>Q0D4E9</accession>
<keyword id="KW-0479">Metal-binding</keyword>
<keyword id="KW-0539">Nucleus</keyword>
<keyword id="KW-1185">Reference proteome</keyword>
<keyword id="KW-0804">Transcription</keyword>
<keyword id="KW-0805">Transcription regulation</keyword>
<keyword id="KW-0862">Zinc</keyword>
<keyword id="KW-0863">Zinc-finger</keyword>
<protein>
    <recommendedName>
        <fullName>Transcription elongation factor 1 homolog</fullName>
    </recommendedName>
</protein>
<organism>
    <name type="scientific">Oryza sativa subsp. japonica</name>
    <name type="common">Rice</name>
    <dbReference type="NCBI Taxonomy" id="39947"/>
    <lineage>
        <taxon>Eukaryota</taxon>
        <taxon>Viridiplantae</taxon>
        <taxon>Streptophyta</taxon>
        <taxon>Embryophyta</taxon>
        <taxon>Tracheophyta</taxon>
        <taxon>Spermatophyta</taxon>
        <taxon>Magnoliopsida</taxon>
        <taxon>Liliopsida</taxon>
        <taxon>Poales</taxon>
        <taxon>Poaceae</taxon>
        <taxon>BOP clade</taxon>
        <taxon>Oryzoideae</taxon>
        <taxon>Oryzeae</taxon>
        <taxon>Oryzinae</taxon>
        <taxon>Oryza</taxon>
        <taxon>Oryza sativa</taxon>
    </lineage>
</organism>
<sequence length="89" mass="10000">MGKRKSAAKPPPKKRMDKLDTVFSCPFCNHGSSVECRIDMKNLIGEASCRICQENFSTTVNALTEPIDIYSEWIDECERVNNVEDDDGA</sequence>